<sequence length="156" mass="16008">MNIIKANVAAPDARVAITIARFNQFINDSLLDGAVDALTRIGQVKDDNITVVWVPGAYELPLATEALAKSGKYDAVVALGTVIRGGTAHFEYVAGGASNGLASVAQDSGVPVAFGVLTTESIEQAIERAGTKAGNKGAEAALTALEMINVLKAIKA</sequence>
<organism>
    <name type="scientific">Salmonella choleraesuis (strain SC-B67)</name>
    <dbReference type="NCBI Taxonomy" id="321314"/>
    <lineage>
        <taxon>Bacteria</taxon>
        <taxon>Pseudomonadati</taxon>
        <taxon>Pseudomonadota</taxon>
        <taxon>Gammaproteobacteria</taxon>
        <taxon>Enterobacterales</taxon>
        <taxon>Enterobacteriaceae</taxon>
        <taxon>Salmonella</taxon>
    </lineage>
</organism>
<gene>
    <name evidence="1" type="primary">ribH</name>
    <name type="ordered locus">SCH_0458</name>
</gene>
<comment type="function">
    <text evidence="1">Catalyzes the formation of 6,7-dimethyl-8-ribityllumazine by condensation of 5-amino-6-(D-ribitylamino)uracil with 3,4-dihydroxy-2-butanone 4-phosphate. This is the penultimate step in the biosynthesis of riboflavin.</text>
</comment>
<comment type="catalytic activity">
    <reaction evidence="1">
        <text>(2S)-2-hydroxy-3-oxobutyl phosphate + 5-amino-6-(D-ribitylamino)uracil = 6,7-dimethyl-8-(1-D-ribityl)lumazine + phosphate + 2 H2O + H(+)</text>
        <dbReference type="Rhea" id="RHEA:26152"/>
        <dbReference type="ChEBI" id="CHEBI:15377"/>
        <dbReference type="ChEBI" id="CHEBI:15378"/>
        <dbReference type="ChEBI" id="CHEBI:15934"/>
        <dbReference type="ChEBI" id="CHEBI:43474"/>
        <dbReference type="ChEBI" id="CHEBI:58201"/>
        <dbReference type="ChEBI" id="CHEBI:58830"/>
        <dbReference type="EC" id="2.5.1.78"/>
    </reaction>
</comment>
<comment type="pathway">
    <text evidence="1">Cofactor biosynthesis; riboflavin biosynthesis; riboflavin from 2-hydroxy-3-oxobutyl phosphate and 5-amino-6-(D-ribitylamino)uracil: step 1/2.</text>
</comment>
<comment type="subunit">
    <text evidence="1">Forms an icosahedral capsid composed of 60 subunits, arranged as a dodecamer of pentamers.</text>
</comment>
<comment type="similarity">
    <text evidence="1">Belongs to the DMRL synthase family.</text>
</comment>
<protein>
    <recommendedName>
        <fullName evidence="1">6,7-dimethyl-8-ribityllumazine synthase</fullName>
        <shortName evidence="1">DMRL synthase</shortName>
        <shortName evidence="1">LS</shortName>
        <shortName evidence="1">Lumazine synthase</shortName>
        <ecNumber evidence="1">2.5.1.78</ecNumber>
    </recommendedName>
</protein>
<keyword id="KW-0686">Riboflavin biosynthesis</keyword>
<keyword id="KW-0808">Transferase</keyword>
<accession>Q57SE7</accession>
<reference key="1">
    <citation type="journal article" date="2005" name="Nucleic Acids Res.">
        <title>The genome sequence of Salmonella enterica serovar Choleraesuis, a highly invasive and resistant zoonotic pathogen.</title>
        <authorList>
            <person name="Chiu C.-H."/>
            <person name="Tang P."/>
            <person name="Chu C."/>
            <person name="Hu S."/>
            <person name="Bao Q."/>
            <person name="Yu J."/>
            <person name="Chou Y.-Y."/>
            <person name="Wang H.-S."/>
            <person name="Lee Y.-S."/>
        </authorList>
    </citation>
    <scope>NUCLEOTIDE SEQUENCE [LARGE SCALE GENOMIC DNA]</scope>
    <source>
        <strain>SC-B67</strain>
    </source>
</reference>
<dbReference type="EC" id="2.5.1.78" evidence="1"/>
<dbReference type="EMBL" id="AE017220">
    <property type="protein sequence ID" value="AAX64364.1"/>
    <property type="molecule type" value="Genomic_DNA"/>
</dbReference>
<dbReference type="SMR" id="Q57SE7"/>
<dbReference type="KEGG" id="sec:SCH_0458"/>
<dbReference type="HOGENOM" id="CLU_089358_1_1_6"/>
<dbReference type="UniPathway" id="UPA00275">
    <property type="reaction ID" value="UER00404"/>
</dbReference>
<dbReference type="Proteomes" id="UP000000538">
    <property type="component" value="Chromosome"/>
</dbReference>
<dbReference type="GO" id="GO:0005829">
    <property type="term" value="C:cytosol"/>
    <property type="evidence" value="ECO:0007669"/>
    <property type="project" value="TreeGrafter"/>
</dbReference>
<dbReference type="GO" id="GO:0009349">
    <property type="term" value="C:riboflavin synthase complex"/>
    <property type="evidence" value="ECO:0007669"/>
    <property type="project" value="InterPro"/>
</dbReference>
<dbReference type="GO" id="GO:0000906">
    <property type="term" value="F:6,7-dimethyl-8-ribityllumazine synthase activity"/>
    <property type="evidence" value="ECO:0007669"/>
    <property type="project" value="UniProtKB-UniRule"/>
</dbReference>
<dbReference type="GO" id="GO:0009231">
    <property type="term" value="P:riboflavin biosynthetic process"/>
    <property type="evidence" value="ECO:0007669"/>
    <property type="project" value="UniProtKB-UniRule"/>
</dbReference>
<dbReference type="CDD" id="cd09209">
    <property type="entry name" value="Lumazine_synthase-I"/>
    <property type="match status" value="1"/>
</dbReference>
<dbReference type="FunFam" id="3.40.50.960:FF:000001">
    <property type="entry name" value="6,7-dimethyl-8-ribityllumazine synthase"/>
    <property type="match status" value="1"/>
</dbReference>
<dbReference type="Gene3D" id="3.40.50.960">
    <property type="entry name" value="Lumazine/riboflavin synthase"/>
    <property type="match status" value="1"/>
</dbReference>
<dbReference type="HAMAP" id="MF_00178">
    <property type="entry name" value="Lumazine_synth"/>
    <property type="match status" value="1"/>
</dbReference>
<dbReference type="InterPro" id="IPR034964">
    <property type="entry name" value="LS"/>
</dbReference>
<dbReference type="InterPro" id="IPR002180">
    <property type="entry name" value="LS/RS"/>
</dbReference>
<dbReference type="InterPro" id="IPR036467">
    <property type="entry name" value="LS/RS_sf"/>
</dbReference>
<dbReference type="NCBIfam" id="TIGR00114">
    <property type="entry name" value="lumazine-synth"/>
    <property type="match status" value="1"/>
</dbReference>
<dbReference type="NCBIfam" id="NF000812">
    <property type="entry name" value="PRK00061.1-4"/>
    <property type="match status" value="1"/>
</dbReference>
<dbReference type="PANTHER" id="PTHR21058:SF0">
    <property type="entry name" value="6,7-DIMETHYL-8-RIBITYLLUMAZINE SYNTHASE"/>
    <property type="match status" value="1"/>
</dbReference>
<dbReference type="PANTHER" id="PTHR21058">
    <property type="entry name" value="6,7-DIMETHYL-8-RIBITYLLUMAZINE SYNTHASE DMRL SYNTHASE LUMAZINE SYNTHASE"/>
    <property type="match status" value="1"/>
</dbReference>
<dbReference type="Pfam" id="PF00885">
    <property type="entry name" value="DMRL_synthase"/>
    <property type="match status" value="1"/>
</dbReference>
<dbReference type="SUPFAM" id="SSF52121">
    <property type="entry name" value="Lumazine synthase"/>
    <property type="match status" value="1"/>
</dbReference>
<name>RISB_SALCH</name>
<feature type="chain" id="PRO_1000040503" description="6,7-dimethyl-8-ribityllumazine synthase">
    <location>
        <begin position="1"/>
        <end position="156"/>
    </location>
</feature>
<feature type="active site" description="Proton donor" evidence="1">
    <location>
        <position position="89"/>
    </location>
</feature>
<feature type="binding site" evidence="1">
    <location>
        <position position="22"/>
    </location>
    <ligand>
        <name>5-amino-6-(D-ribitylamino)uracil</name>
        <dbReference type="ChEBI" id="CHEBI:15934"/>
    </ligand>
</feature>
<feature type="binding site" evidence="1">
    <location>
        <begin position="57"/>
        <end position="59"/>
    </location>
    <ligand>
        <name>5-amino-6-(D-ribitylamino)uracil</name>
        <dbReference type="ChEBI" id="CHEBI:15934"/>
    </ligand>
</feature>
<feature type="binding site" evidence="1">
    <location>
        <begin position="81"/>
        <end position="83"/>
    </location>
    <ligand>
        <name>5-amino-6-(D-ribitylamino)uracil</name>
        <dbReference type="ChEBI" id="CHEBI:15934"/>
    </ligand>
</feature>
<feature type="binding site" evidence="1">
    <location>
        <begin position="86"/>
        <end position="87"/>
    </location>
    <ligand>
        <name>(2S)-2-hydroxy-3-oxobutyl phosphate</name>
        <dbReference type="ChEBI" id="CHEBI:58830"/>
    </ligand>
</feature>
<feature type="binding site" evidence="1">
    <location>
        <position position="114"/>
    </location>
    <ligand>
        <name>5-amino-6-(D-ribitylamino)uracil</name>
        <dbReference type="ChEBI" id="CHEBI:15934"/>
    </ligand>
</feature>
<feature type="binding site" evidence="1">
    <location>
        <position position="128"/>
    </location>
    <ligand>
        <name>(2S)-2-hydroxy-3-oxobutyl phosphate</name>
        <dbReference type="ChEBI" id="CHEBI:58830"/>
    </ligand>
</feature>
<proteinExistence type="inferred from homology"/>
<evidence type="ECO:0000255" key="1">
    <source>
        <dbReference type="HAMAP-Rule" id="MF_00178"/>
    </source>
</evidence>